<name>THRC_YEAST</name>
<gene>
    <name type="primary">THR4</name>
    <name type="ordered locus">YCR053W</name>
    <name type="ORF">YCR53W</name>
</gene>
<keyword id="KW-0002">3D-structure</keyword>
<keyword id="KW-0028">Amino-acid biosynthesis</keyword>
<keyword id="KW-0456">Lyase</keyword>
<keyword id="KW-0597">Phosphoprotein</keyword>
<keyword id="KW-0663">Pyridoxal phosphate</keyword>
<keyword id="KW-1185">Reference proteome</keyword>
<keyword id="KW-0791">Threonine biosynthesis</keyword>
<proteinExistence type="evidence at protein level"/>
<feature type="chain" id="PRO_0000185645" description="Threonine synthase">
    <location>
        <begin position="1"/>
        <end position="514"/>
    </location>
</feature>
<feature type="binding site" evidence="1 11">
    <location>
        <position position="277"/>
    </location>
    <ligand>
        <name>pyridoxal 5'-phosphate</name>
        <dbReference type="ChEBI" id="CHEBI:597326"/>
    </ligand>
</feature>
<feature type="binding site" evidence="1 11">
    <location>
        <position position="278"/>
    </location>
    <ligand>
        <name>pyridoxal 5'-phosphate</name>
        <dbReference type="ChEBI" id="CHEBI:597326"/>
    </ligand>
</feature>
<feature type="binding site" evidence="1 11">
    <location>
        <position position="279"/>
    </location>
    <ligand>
        <name>pyridoxal 5'-phosphate</name>
        <dbReference type="ChEBI" id="CHEBI:597326"/>
    </ligand>
</feature>
<feature type="binding site" evidence="1 11">
    <location>
        <position position="281"/>
    </location>
    <ligand>
        <name>pyridoxal 5'-phosphate</name>
        <dbReference type="ChEBI" id="CHEBI:597326"/>
    </ligand>
</feature>
<feature type="binding site" evidence="1 11">
    <location>
        <position position="449"/>
    </location>
    <ligand>
        <name>pyridoxal 5'-phosphate</name>
        <dbReference type="ChEBI" id="CHEBI:597326"/>
    </ligand>
</feature>
<feature type="modified residue" description="N6-(pyridoxal phosphate)lysine" evidence="9 11">
    <location>
        <position position="124"/>
    </location>
</feature>
<feature type="modified residue" description="Phosphoserine" evidence="12">
    <location>
        <position position="467"/>
    </location>
</feature>
<feature type="sequence conflict" description="In Ref. 5; AAU09679." evidence="8" ref="5">
    <original>K</original>
    <variation>R</variation>
    <location>
        <position position="176"/>
    </location>
</feature>
<feature type="strand" evidence="13">
    <location>
        <begin position="8"/>
        <end position="10"/>
    </location>
</feature>
<feature type="helix" evidence="13">
    <location>
        <begin position="21"/>
        <end position="27"/>
    </location>
</feature>
<feature type="helix" evidence="13">
    <location>
        <begin position="46"/>
        <end position="51"/>
    </location>
</feature>
<feature type="turn" evidence="13">
    <location>
        <begin position="52"/>
        <end position="55"/>
    </location>
</feature>
<feature type="helix" evidence="13">
    <location>
        <begin position="58"/>
        <end position="67"/>
    </location>
</feature>
<feature type="turn" evidence="13">
    <location>
        <begin position="72"/>
        <end position="74"/>
    </location>
</feature>
<feature type="helix" evidence="13">
    <location>
        <begin position="77"/>
        <end position="87"/>
    </location>
</feature>
<feature type="turn" evidence="13">
    <location>
        <begin position="88"/>
        <end position="90"/>
    </location>
</feature>
<feature type="strand" evidence="13">
    <location>
        <begin position="106"/>
        <end position="108"/>
    </location>
</feature>
<feature type="strand" evidence="13">
    <location>
        <begin position="110"/>
        <end position="114"/>
    </location>
</feature>
<feature type="helix" evidence="13">
    <location>
        <begin position="125"/>
        <end position="143"/>
    </location>
</feature>
<feature type="strand" evidence="13">
    <location>
        <begin position="148"/>
        <end position="150"/>
    </location>
</feature>
<feature type="strand" evidence="13">
    <location>
        <begin position="154"/>
        <end position="159"/>
    </location>
</feature>
<feature type="strand" evidence="13">
    <location>
        <begin position="161"/>
        <end position="163"/>
    </location>
</feature>
<feature type="helix" evidence="13">
    <location>
        <begin position="164"/>
        <end position="172"/>
    </location>
</feature>
<feature type="strand" evidence="13">
    <location>
        <begin position="178"/>
        <end position="185"/>
    </location>
</feature>
<feature type="helix" evidence="13">
    <location>
        <begin position="191"/>
        <end position="199"/>
    </location>
</feature>
<feature type="strand" evidence="13">
    <location>
        <begin position="205"/>
        <end position="212"/>
    </location>
</feature>
<feature type="helix" evidence="13">
    <location>
        <begin position="214"/>
        <end position="226"/>
    </location>
</feature>
<feature type="helix" evidence="13">
    <location>
        <begin position="244"/>
        <end position="262"/>
    </location>
</feature>
<feature type="strand" evidence="13">
    <location>
        <begin position="263"/>
        <end position="266"/>
    </location>
</feature>
<feature type="strand" evidence="13">
    <location>
        <begin position="270"/>
        <end position="275"/>
    </location>
</feature>
<feature type="strand" evidence="13">
    <location>
        <begin position="277"/>
        <end position="279"/>
    </location>
</feature>
<feature type="helix" evidence="13">
    <location>
        <begin position="280"/>
        <end position="291"/>
    </location>
</feature>
<feature type="strand" evidence="13">
    <location>
        <begin position="298"/>
        <end position="302"/>
    </location>
</feature>
<feature type="helix" evidence="13">
    <location>
        <begin position="307"/>
        <end position="314"/>
    </location>
</feature>
<feature type="strand" evidence="13">
    <location>
        <begin position="315"/>
        <end position="318"/>
    </location>
</feature>
<feature type="helix" evidence="13">
    <location>
        <begin position="329"/>
        <end position="331"/>
    </location>
</feature>
<feature type="helix" evidence="13">
    <location>
        <begin position="339"/>
        <end position="350"/>
    </location>
</feature>
<feature type="helix" evidence="13">
    <location>
        <begin position="356"/>
        <end position="373"/>
    </location>
</feature>
<feature type="strand" evidence="13">
    <location>
        <begin position="374"/>
        <end position="377"/>
    </location>
</feature>
<feature type="helix" evidence="13">
    <location>
        <begin position="380"/>
        <end position="386"/>
    </location>
</feature>
<feature type="turn" evidence="13">
    <location>
        <begin position="387"/>
        <end position="389"/>
    </location>
</feature>
<feature type="strand" evidence="13">
    <location>
        <begin position="390"/>
        <end position="394"/>
    </location>
</feature>
<feature type="helix" evidence="13">
    <location>
        <begin position="397"/>
        <end position="410"/>
    </location>
</feature>
<feature type="helix" evidence="13">
    <location>
        <begin position="421"/>
        <end position="437"/>
    </location>
</feature>
<feature type="strand" evidence="13">
    <location>
        <begin position="442"/>
        <end position="448"/>
    </location>
</feature>
<feature type="helix" evidence="13">
    <location>
        <begin position="452"/>
        <end position="455"/>
    </location>
</feature>
<feature type="helix" evidence="13">
    <location>
        <begin position="456"/>
        <end position="463"/>
    </location>
</feature>
<feature type="helix" evidence="13">
    <location>
        <begin position="471"/>
        <end position="474"/>
    </location>
</feature>
<feature type="helix" evidence="13">
    <location>
        <begin position="478"/>
        <end position="481"/>
    </location>
</feature>
<feature type="helix" evidence="13">
    <location>
        <begin position="483"/>
        <end position="485"/>
    </location>
</feature>
<feature type="helix" evidence="13">
    <location>
        <begin position="498"/>
        <end position="506"/>
    </location>
</feature>
<evidence type="ECO:0000269" key="1">
    <source>
    </source>
</evidence>
<evidence type="ECO:0000269" key="2">
    <source>
    </source>
</evidence>
<evidence type="ECO:0000269" key="3">
    <source>
    </source>
</evidence>
<evidence type="ECO:0000269" key="4">
    <source>
    </source>
</evidence>
<evidence type="ECO:0000269" key="5">
    <source>
    </source>
</evidence>
<evidence type="ECO:0000303" key="6">
    <source>
    </source>
</evidence>
<evidence type="ECO:0000303" key="7">
    <source>
    </source>
</evidence>
<evidence type="ECO:0000305" key="8"/>
<evidence type="ECO:0000305" key="9">
    <source>
    </source>
</evidence>
<evidence type="ECO:0000305" key="10">
    <source>
    </source>
</evidence>
<evidence type="ECO:0007744" key="11">
    <source>
        <dbReference type="PDB" id="1KL7"/>
    </source>
</evidence>
<evidence type="ECO:0007744" key="12">
    <source>
    </source>
</evidence>
<evidence type="ECO:0007829" key="13">
    <source>
        <dbReference type="PDB" id="1KL7"/>
    </source>
</evidence>
<accession>P16120</accession>
<accession>D6VR61</accession>
<accession>E9P943</accession>
<protein>
    <recommendedName>
        <fullName>Threonine synthase</fullName>
        <shortName>TS</shortName>
        <ecNumber evidence="10">4.2.3.1</ecNumber>
    </recommendedName>
</protein>
<organism>
    <name type="scientific">Saccharomyces cerevisiae (strain ATCC 204508 / S288c)</name>
    <name type="common">Baker's yeast</name>
    <dbReference type="NCBI Taxonomy" id="559292"/>
    <lineage>
        <taxon>Eukaryota</taxon>
        <taxon>Fungi</taxon>
        <taxon>Dikarya</taxon>
        <taxon>Ascomycota</taxon>
        <taxon>Saccharomycotina</taxon>
        <taxon>Saccharomycetes</taxon>
        <taxon>Saccharomycetales</taxon>
        <taxon>Saccharomycetaceae</taxon>
        <taxon>Saccharomyces</taxon>
    </lineage>
</organism>
<sequence>MPNASQVYRSTRSSSPKTISFEEAIIQGLATDGGLFIPPTIPQVDQATLFNDWSKLSFQDLAFAIMRLYIAQEEIPDADLKDLIKRSYSTFRSDEVTPLVQNVTGDKENLHILELFHGPTYAFKDVALQFVGNLFEYFLQRTNANLPEGEKKQITVVGATSGDTGSAAIYGLRGKKDVSVFILYPTGRISPIQEEQMTTVPDENVQTLSVTGTFDNCQDIVKAIFGDKEFNSKHNVGAVNSINWARILAQMTYYFYSFFQATNGKDSKKVKFVVPSGNFGDILAGYFAKKMGLPIEKLAIATNENDILDRFLKSGLYERSDKVAATLSPAMDILISSNFERLLWYLAREYLANGDDLKAGEIVNNWFQELKTNGKFQVDKSIIEGASKDFTSERVSNEETSETIKKIYESSVNPKHYILDPHTAVGVCATERLIAKDNDKSIQYISLSTAHPAKFADAVNNALSGFSNYSFEKDVLPEELKKLSTLKKKLKFIERADVELVKNAIEEELAKMKL</sequence>
<dbReference type="EC" id="4.2.3.1" evidence="10"/>
<dbReference type="EMBL" id="X17256">
    <property type="protein sequence ID" value="CAA35157.1"/>
    <property type="molecule type" value="Genomic_DNA"/>
</dbReference>
<dbReference type="EMBL" id="X59720">
    <property type="protein sequence ID" value="CAA42284.1"/>
    <property type="molecule type" value="Genomic_DNA"/>
</dbReference>
<dbReference type="EMBL" id="AY723762">
    <property type="protein sequence ID" value="AAU09679.1"/>
    <property type="molecule type" value="Genomic_DNA"/>
</dbReference>
<dbReference type="EMBL" id="BK006937">
    <property type="protein sequence ID" value="DAA07530.1"/>
    <property type="molecule type" value="Genomic_DNA"/>
</dbReference>
<dbReference type="PIR" id="S22836">
    <property type="entry name" value="SYBSR"/>
</dbReference>
<dbReference type="RefSeq" id="NP_009982.1">
    <property type="nucleotide sequence ID" value="NM_001178767.1"/>
</dbReference>
<dbReference type="PDB" id="1KL7">
    <property type="method" value="X-ray"/>
    <property type="resolution" value="2.70 A"/>
    <property type="chains" value="A/B=1-514"/>
</dbReference>
<dbReference type="PDBsum" id="1KL7"/>
<dbReference type="SMR" id="P16120"/>
<dbReference type="BioGRID" id="31033">
    <property type="interactions" value="790"/>
</dbReference>
<dbReference type="DIP" id="DIP-6522N"/>
<dbReference type="FunCoup" id="P16120">
    <property type="interactions" value="335"/>
</dbReference>
<dbReference type="IntAct" id="P16120">
    <property type="interactions" value="12"/>
</dbReference>
<dbReference type="MINT" id="P16120"/>
<dbReference type="STRING" id="4932.YCR053W"/>
<dbReference type="iPTMnet" id="P16120"/>
<dbReference type="PaxDb" id="4932-YCR053W"/>
<dbReference type="PeptideAtlas" id="P16120"/>
<dbReference type="TopDownProteomics" id="P16120"/>
<dbReference type="DNASU" id="850420"/>
<dbReference type="EnsemblFungi" id="YCR053W_mRNA">
    <property type="protein sequence ID" value="YCR053W"/>
    <property type="gene ID" value="YCR053W"/>
</dbReference>
<dbReference type="GeneID" id="850420"/>
<dbReference type="KEGG" id="sce:YCR053W"/>
<dbReference type="AGR" id="SGD:S000000649"/>
<dbReference type="SGD" id="S000000649">
    <property type="gene designation" value="THR4"/>
</dbReference>
<dbReference type="VEuPathDB" id="FungiDB:YCR053W"/>
<dbReference type="eggNOG" id="KOG2616">
    <property type="taxonomic scope" value="Eukaryota"/>
</dbReference>
<dbReference type="GeneTree" id="ENSGT00940000161144"/>
<dbReference type="HOGENOM" id="CLU_015170_1_0_1"/>
<dbReference type="InParanoid" id="P16120"/>
<dbReference type="OMA" id="NFERYLY"/>
<dbReference type="OrthoDB" id="5203861at2759"/>
<dbReference type="BioCyc" id="YEAST:YCR053W-MONOMER"/>
<dbReference type="BRENDA" id="4.2.3.1">
    <property type="organism ID" value="984"/>
</dbReference>
<dbReference type="UniPathway" id="UPA00050">
    <property type="reaction ID" value="UER00065"/>
</dbReference>
<dbReference type="BioGRID-ORCS" id="850420">
    <property type="hits" value="1 hit in 10 CRISPR screens"/>
</dbReference>
<dbReference type="EvolutionaryTrace" id="P16120"/>
<dbReference type="PRO" id="PR:P16120"/>
<dbReference type="Proteomes" id="UP000002311">
    <property type="component" value="Chromosome III"/>
</dbReference>
<dbReference type="RNAct" id="P16120">
    <property type="molecule type" value="protein"/>
</dbReference>
<dbReference type="GO" id="GO:0005737">
    <property type="term" value="C:cytoplasm"/>
    <property type="evidence" value="ECO:0007005"/>
    <property type="project" value="SGD"/>
</dbReference>
<dbReference type="GO" id="GO:0005634">
    <property type="term" value="C:nucleus"/>
    <property type="evidence" value="ECO:0007005"/>
    <property type="project" value="SGD"/>
</dbReference>
<dbReference type="GO" id="GO:0030170">
    <property type="term" value="F:pyridoxal phosphate binding"/>
    <property type="evidence" value="ECO:0000314"/>
    <property type="project" value="UniProtKB"/>
</dbReference>
<dbReference type="GO" id="GO:0004795">
    <property type="term" value="F:threonine synthase activity"/>
    <property type="evidence" value="ECO:0000315"/>
    <property type="project" value="SGD"/>
</dbReference>
<dbReference type="GO" id="GO:0009088">
    <property type="term" value="P:threonine biosynthetic process"/>
    <property type="evidence" value="ECO:0000315"/>
    <property type="project" value="SGD"/>
</dbReference>
<dbReference type="CDD" id="cd01560">
    <property type="entry name" value="Thr-synth_2"/>
    <property type="match status" value="1"/>
</dbReference>
<dbReference type="FunFam" id="3.40.50.1100:FF:000046">
    <property type="entry name" value="THR4p Threonine synthase"/>
    <property type="match status" value="1"/>
</dbReference>
<dbReference type="FunFam" id="3.90.1380.10:FF:000003">
    <property type="entry name" value="THR4p Threonine synthase"/>
    <property type="match status" value="1"/>
</dbReference>
<dbReference type="Gene3D" id="3.40.50.1100">
    <property type="match status" value="2"/>
</dbReference>
<dbReference type="Gene3D" id="3.90.1380.10">
    <property type="entry name" value="Threonine synthase, N-terminal domain"/>
    <property type="match status" value="1"/>
</dbReference>
<dbReference type="InterPro" id="IPR000634">
    <property type="entry name" value="Ser/Thr_deHydtase_PyrdxlP-BS"/>
</dbReference>
<dbReference type="InterPro" id="IPR029144">
    <property type="entry name" value="Thr_synth_N"/>
</dbReference>
<dbReference type="InterPro" id="IPR037158">
    <property type="entry name" value="Thr_synth_N_sf"/>
</dbReference>
<dbReference type="InterPro" id="IPR004450">
    <property type="entry name" value="Thr_synthase-like"/>
</dbReference>
<dbReference type="InterPro" id="IPR051166">
    <property type="entry name" value="Threonine_Synthase"/>
</dbReference>
<dbReference type="InterPro" id="IPR001926">
    <property type="entry name" value="TrpB-like_PALP"/>
</dbReference>
<dbReference type="InterPro" id="IPR036052">
    <property type="entry name" value="TrpB-like_PALP_sf"/>
</dbReference>
<dbReference type="NCBIfam" id="TIGR00260">
    <property type="entry name" value="thrC"/>
    <property type="match status" value="1"/>
</dbReference>
<dbReference type="PANTHER" id="PTHR42690">
    <property type="entry name" value="THREONINE SYNTHASE FAMILY MEMBER"/>
    <property type="match status" value="1"/>
</dbReference>
<dbReference type="PANTHER" id="PTHR42690:SF1">
    <property type="entry name" value="THREONINE SYNTHASE-LIKE 2"/>
    <property type="match status" value="1"/>
</dbReference>
<dbReference type="Pfam" id="PF00291">
    <property type="entry name" value="PALP"/>
    <property type="match status" value="1"/>
</dbReference>
<dbReference type="Pfam" id="PF24857">
    <property type="entry name" value="THR4_C"/>
    <property type="match status" value="1"/>
</dbReference>
<dbReference type="Pfam" id="PF14821">
    <property type="entry name" value="Thr_synth_N"/>
    <property type="match status" value="1"/>
</dbReference>
<dbReference type="SUPFAM" id="SSF53686">
    <property type="entry name" value="Tryptophan synthase beta subunit-like PLP-dependent enzymes"/>
    <property type="match status" value="1"/>
</dbReference>
<dbReference type="PROSITE" id="PS00165">
    <property type="entry name" value="DEHYDRATASE_SER_THR"/>
    <property type="match status" value="1"/>
</dbReference>
<reference key="1">
    <citation type="journal article" date="1990" name="Nucleic Acids Res.">
        <title>Nucleotide sequence of the yeast THR4 gene encoding threonine synthase.</title>
        <authorList>
            <person name="Aas S.F."/>
            <person name="Rognes S.E."/>
        </authorList>
    </citation>
    <scope>NUCLEOTIDE SEQUENCE [GENOMIC DNA]</scope>
    <source>
        <strain>ATCC 26786 / X2180-1A</strain>
    </source>
</reference>
<reference key="2">
    <citation type="journal article" date="1990" name="Yeast">
        <title>Analysis of the THR4 region on chromosome III of the yeast Saccharomyces cerevisiae.</title>
        <authorList>
            <person name="Mannhaupt G."/>
            <person name="van der Linden C.G."/>
            <person name="Vetter I."/>
            <person name="Maurer K."/>
            <person name="Pilz U."/>
            <person name="Planta R.J."/>
            <person name="Feldmann H."/>
        </authorList>
    </citation>
    <scope>NUCLEOTIDE SEQUENCE [GENOMIC DNA]</scope>
</reference>
<reference key="3">
    <citation type="journal article" date="1992" name="Nature">
        <title>The complete DNA sequence of yeast chromosome III.</title>
        <authorList>
            <person name="Oliver S.G."/>
            <person name="van der Aart Q.J.M."/>
            <person name="Agostoni-Carbone M.L."/>
            <person name="Aigle M."/>
            <person name="Alberghina L."/>
            <person name="Alexandraki D."/>
            <person name="Antoine G."/>
            <person name="Anwar R."/>
            <person name="Ballesta J.P.G."/>
            <person name="Benit P."/>
            <person name="Berben G."/>
            <person name="Bergantino E."/>
            <person name="Biteau N."/>
            <person name="Bolle P.-A."/>
            <person name="Bolotin-Fukuhara M."/>
            <person name="Brown A."/>
            <person name="Brown A.J.P."/>
            <person name="Buhler J.-M."/>
            <person name="Carcano C."/>
            <person name="Carignani G."/>
            <person name="Cederberg H."/>
            <person name="Chanet R."/>
            <person name="Contreras R."/>
            <person name="Crouzet M."/>
            <person name="Daignan-Fornier B."/>
            <person name="Defoor E."/>
            <person name="Delgado M.D."/>
            <person name="Demolder J."/>
            <person name="Doira C."/>
            <person name="Dubois E."/>
            <person name="Dujon B."/>
            <person name="Duesterhoeft A."/>
            <person name="Erdmann D."/>
            <person name="Esteban M."/>
            <person name="Fabre F."/>
            <person name="Fairhead C."/>
            <person name="Faye G."/>
            <person name="Feldmann H."/>
            <person name="Fiers W."/>
            <person name="Francingues-Gaillard M.-C."/>
            <person name="Franco L."/>
            <person name="Frontali L."/>
            <person name="Fukuhara H."/>
            <person name="Fuller L.J."/>
            <person name="Galland P."/>
            <person name="Gent M.E."/>
            <person name="Gigot D."/>
            <person name="Gilliquet V."/>
            <person name="Glansdorff N."/>
            <person name="Goffeau A."/>
            <person name="Grenson M."/>
            <person name="Grisanti P."/>
            <person name="Grivell L.A."/>
            <person name="de Haan M."/>
            <person name="Haasemann M."/>
            <person name="Hatat D."/>
            <person name="Hoenicka J."/>
            <person name="Hegemann J.H."/>
            <person name="Herbert C.J."/>
            <person name="Hilger F."/>
            <person name="Hohmann S."/>
            <person name="Hollenberg C.P."/>
            <person name="Huse K."/>
            <person name="Iborra F."/>
            <person name="Indge K.J."/>
            <person name="Isono K."/>
            <person name="Jacq C."/>
            <person name="Jacquet M."/>
            <person name="James C.M."/>
            <person name="Jauniaux J.-C."/>
            <person name="Jia Y."/>
            <person name="Jimenez A."/>
            <person name="Kelly A."/>
            <person name="Kleinhans U."/>
            <person name="Kreisl P."/>
            <person name="Lanfranchi G."/>
            <person name="Lewis C."/>
            <person name="van der Linden C.G."/>
            <person name="Lucchini G."/>
            <person name="Lutzenkirchen K."/>
            <person name="Maat M.J."/>
            <person name="Mallet L."/>
            <person name="Mannhaupt G."/>
            <person name="Martegani E."/>
            <person name="Mathieu A."/>
            <person name="Maurer C.T.C."/>
            <person name="McConnell D."/>
            <person name="McKee R.A."/>
            <person name="Messenguy F."/>
            <person name="Mewes H.-W."/>
            <person name="Molemans F."/>
            <person name="Montague M.A."/>
            <person name="Muzi Falconi M."/>
            <person name="Navas L."/>
            <person name="Newlon C.S."/>
            <person name="Noone D."/>
            <person name="Pallier C."/>
            <person name="Panzeri L."/>
            <person name="Pearson B.M."/>
            <person name="Perea J."/>
            <person name="Philippsen P."/>
            <person name="Pierard A."/>
            <person name="Planta R.J."/>
            <person name="Plevani P."/>
            <person name="Poetsch B."/>
            <person name="Pohl F.M."/>
            <person name="Purnelle B."/>
            <person name="Ramezani Rad M."/>
            <person name="Rasmussen S.W."/>
            <person name="Raynal A."/>
            <person name="Remacha M.A."/>
            <person name="Richterich P."/>
            <person name="Roberts A.B."/>
            <person name="Rodriguez F."/>
            <person name="Sanz E."/>
            <person name="Schaaff-Gerstenschlaeger I."/>
            <person name="Scherens B."/>
            <person name="Schweitzer B."/>
            <person name="Shu Y."/>
            <person name="Skala J."/>
            <person name="Slonimski P.P."/>
            <person name="Sor F."/>
            <person name="Soustelle C."/>
            <person name="Spiegelberg R."/>
            <person name="Stateva L.I."/>
            <person name="Steensma H.Y."/>
            <person name="Steiner S."/>
            <person name="Thierry A."/>
            <person name="Thireos G."/>
            <person name="Tzermia M."/>
            <person name="Urrestarazu L.A."/>
            <person name="Valle G."/>
            <person name="Vetter I."/>
            <person name="van Vliet-Reedijk J.C."/>
            <person name="Voet M."/>
            <person name="Volckaert G."/>
            <person name="Vreken P."/>
            <person name="Wang H."/>
            <person name="Warmington J.R."/>
            <person name="von Wettstein D."/>
            <person name="Wicksteed B.L."/>
            <person name="Wilson C."/>
            <person name="Wurst H."/>
            <person name="Xu G."/>
            <person name="Yoshikawa A."/>
            <person name="Zimmermann F.K."/>
            <person name="Sgouros J.G."/>
        </authorList>
    </citation>
    <scope>NUCLEOTIDE SEQUENCE [LARGE SCALE GENOMIC DNA]</scope>
    <source>
        <strain>ATCC 204508 / S288c</strain>
    </source>
</reference>
<reference key="4">
    <citation type="journal article" date="2014" name="G3 (Bethesda)">
        <title>The reference genome sequence of Saccharomyces cerevisiae: Then and now.</title>
        <authorList>
            <person name="Engel S.R."/>
            <person name="Dietrich F.S."/>
            <person name="Fisk D.G."/>
            <person name="Binkley G."/>
            <person name="Balakrishnan R."/>
            <person name="Costanzo M.C."/>
            <person name="Dwight S.S."/>
            <person name="Hitz B.C."/>
            <person name="Karra K."/>
            <person name="Nash R.S."/>
            <person name="Weng S."/>
            <person name="Wong E.D."/>
            <person name="Lloyd P."/>
            <person name="Skrzypek M.S."/>
            <person name="Miyasato S.R."/>
            <person name="Simison M."/>
            <person name="Cherry J.M."/>
        </authorList>
    </citation>
    <scope>GENOME REANNOTATION</scope>
    <source>
        <strain>ATCC 204508 / S288c</strain>
    </source>
</reference>
<reference key="5">
    <citation type="journal article" date="2007" name="Genome Res.">
        <title>Approaching a complete repository of sequence-verified protein-encoding clones for Saccharomyces cerevisiae.</title>
        <authorList>
            <person name="Hu Y."/>
            <person name="Rolfs A."/>
            <person name="Bhullar B."/>
            <person name="Murthy T.V.S."/>
            <person name="Zhu C."/>
            <person name="Berger M.F."/>
            <person name="Camargo A.A."/>
            <person name="Kelley F."/>
            <person name="McCarron S."/>
            <person name="Jepson D."/>
            <person name="Richardson A."/>
            <person name="Raphael J."/>
            <person name="Moreira D."/>
            <person name="Taycher E."/>
            <person name="Zuo D."/>
            <person name="Mohr S."/>
            <person name="Kane M.F."/>
            <person name="Williamson J."/>
            <person name="Simpson A.J.G."/>
            <person name="Bulyk M.L."/>
            <person name="Harlow E."/>
            <person name="Marsischky G."/>
            <person name="Kolodner R.D."/>
            <person name="LaBaer J."/>
        </authorList>
    </citation>
    <scope>NUCLEOTIDE SEQUENCE [GENOMIC DNA]</scope>
    <source>
        <strain>ATCC 204508 / S288c</strain>
    </source>
</reference>
<reference key="6">
    <citation type="journal article" date="1994" name="FEBS Lett.">
        <title>Biochemical evidence that the Saccharomyces cerevisiae THR4 gene encodes threonine synthetase.</title>
        <authorList>
            <person name="Ramos C."/>
            <person name="Calderon I.L."/>
        </authorList>
    </citation>
    <scope>FUNCTION</scope>
    <scope>CATALYTIC ACTIVITY</scope>
    <scope>PATHWAY</scope>
</reference>
<reference key="7">
    <citation type="journal article" date="2003" name="Nature">
        <title>Global analysis of protein expression in yeast.</title>
        <authorList>
            <person name="Ghaemmaghami S."/>
            <person name="Huh W.-K."/>
            <person name="Bower K."/>
            <person name="Howson R.W."/>
            <person name="Belle A."/>
            <person name="Dephoure N."/>
            <person name="O'Shea E.K."/>
            <person name="Weissman J.S."/>
        </authorList>
    </citation>
    <scope>LEVEL OF PROTEIN EXPRESSION [LARGE SCALE ANALYSIS]</scope>
</reference>
<reference key="8">
    <citation type="journal article" date="2008" name="Mol. Cell. Proteomics">
        <title>A multidimensional chromatography technology for in-depth phosphoproteome analysis.</title>
        <authorList>
            <person name="Albuquerque C.P."/>
            <person name="Smolka M.B."/>
            <person name="Payne S.H."/>
            <person name="Bafna V."/>
            <person name="Eng J."/>
            <person name="Zhou H."/>
        </authorList>
    </citation>
    <scope>PHOSPHORYLATION [LARGE SCALE ANALYSIS] AT SER-467</scope>
    <scope>IDENTIFICATION BY MASS SPECTROMETRY [LARGE SCALE ANALYSIS]</scope>
</reference>
<reference key="9">
    <citation type="journal article" date="2010" name="Eukaryot. Cell">
        <title>Homoserine toxicity in Saccharomyces cerevisiae and Candida albicans homoserine kinase (thr1Delta) mutants.</title>
        <authorList>
            <person name="Kingsbury J.M."/>
            <person name="McCusker J.H."/>
        </authorList>
    </citation>
    <scope>DISRUPTION PHENOTYPE</scope>
    <source>
        <strain evidence="6">YJM 145</strain>
    </source>
</reference>
<reference key="10">
    <citation type="journal article" date="2010" name="Eukaryot. Cell">
        <title>Fungal homoserine kinase (thr1Delta) mutants are attenuated in virulence and die rapidly upon threonine starvation and serum incubation.</title>
        <authorList>
            <person name="Kingsbury J.M."/>
            <person name="McCusker J.H."/>
        </authorList>
    </citation>
    <scope>DISRUPTION PHENOTYPE</scope>
    <source>
        <strain evidence="7">YJM 145</strain>
    </source>
</reference>
<reference key="11">
    <citation type="journal article" date="2012" name="Proc. Natl. Acad. Sci. U.S.A.">
        <title>N-terminal acetylome analyses and functional insights of the N-terminal acetyltransferase NatB.</title>
        <authorList>
            <person name="Van Damme P."/>
            <person name="Lasa M."/>
            <person name="Polevoda B."/>
            <person name="Gazquez C."/>
            <person name="Elosegui-Artola A."/>
            <person name="Kim D.S."/>
            <person name="De Juan-Pardo E."/>
            <person name="Demeyer K."/>
            <person name="Hole K."/>
            <person name="Larrea E."/>
            <person name="Timmerman E."/>
            <person name="Prieto J."/>
            <person name="Arnesen T."/>
            <person name="Sherman F."/>
            <person name="Gevaert K."/>
            <person name="Aldabe R."/>
        </authorList>
    </citation>
    <scope>IDENTIFICATION BY MASS SPECTROMETRY [LARGE SCALE ANALYSIS]</scope>
</reference>
<reference evidence="11" key="12">
    <citation type="journal article" date="2002" name="J. Biol. Chem.">
        <title>Structure and function of threonine synthase from yeast.</title>
        <authorList>
            <person name="Garrido-Franco M."/>
            <person name="Ehlert S."/>
            <person name="Messerschmidt A."/>
            <person name="Marinkovic' S."/>
            <person name="Huber R."/>
            <person name="Laber B."/>
            <person name="Bourenkov G.P."/>
            <person name="Clausen T."/>
        </authorList>
    </citation>
    <scope>X-RAY CRYSTALLOGRAPHY (2.70 ANGSTROMS) IN COMPLEX WITH PYRIDOXAL 5'-PHOSPHATE</scope>
    <scope>COFACTOR</scope>
</reference>
<comment type="function">
    <text evidence="5">Catalyzes the gamma-elimination of phosphate from L-phosphohomoserine and the beta-addition of water to produce L-threonine.</text>
</comment>
<comment type="catalytic activity">
    <reaction evidence="10">
        <text>O-phospho-L-homoserine + H2O = L-threonine + phosphate</text>
        <dbReference type="Rhea" id="RHEA:10840"/>
        <dbReference type="ChEBI" id="CHEBI:15377"/>
        <dbReference type="ChEBI" id="CHEBI:43474"/>
        <dbReference type="ChEBI" id="CHEBI:57590"/>
        <dbReference type="ChEBI" id="CHEBI:57926"/>
        <dbReference type="EC" id="4.2.3.1"/>
    </reaction>
    <physiologicalReaction direction="left-to-right" evidence="10">
        <dbReference type="Rhea" id="RHEA:10841"/>
    </physiologicalReaction>
</comment>
<comment type="cofactor">
    <cofactor evidence="1">
        <name>pyridoxal 5'-phosphate</name>
        <dbReference type="ChEBI" id="CHEBI:597326"/>
    </cofactor>
</comment>
<comment type="pathway">
    <text evidence="5">Amino-acid biosynthesis; L-threonine biosynthesis; L-threonine from L-aspartate: step 5/5.</text>
</comment>
<comment type="disruption phenotype">
    <text evidence="3 4">Threonine auxotrophy (PubMed:20305002). Leads to accumulation of toxic levels of homoserine (PubMed:20305002). Sensitive to sodium chloride, lithium chloride, thermal stress, cold stress, high pH, UV and 5-fluorocytosine (PubMed:20305002, PubMed:20305003). Decreases survival time in an in vivo model of infection (PubMed:20305003).</text>
</comment>
<comment type="miscellaneous">
    <text evidence="2">Present with 26000 molecules/cell in log phase SD medium.</text>
</comment>
<comment type="similarity">
    <text evidence="8">Belongs to the threonine synthase family.</text>
</comment>